<evidence type="ECO:0000255" key="1">
    <source>
        <dbReference type="HAMAP-Rule" id="MF_00214"/>
    </source>
</evidence>
<dbReference type="EC" id="4.2.1.10" evidence="1"/>
<dbReference type="EMBL" id="CP000260">
    <property type="protein sequence ID" value="ABF33744.1"/>
    <property type="molecule type" value="Genomic_DNA"/>
</dbReference>
<dbReference type="RefSeq" id="WP_002985140.1">
    <property type="nucleotide sequence ID" value="NZ_CVUH01000002.1"/>
</dbReference>
<dbReference type="SMR" id="Q1JHJ2"/>
<dbReference type="GeneID" id="69901072"/>
<dbReference type="KEGG" id="sph:MGAS10270_Spy0679"/>
<dbReference type="HOGENOM" id="CLU_064444_0_0_9"/>
<dbReference type="UniPathway" id="UPA00053">
    <property type="reaction ID" value="UER00086"/>
</dbReference>
<dbReference type="Proteomes" id="UP000002436">
    <property type="component" value="Chromosome"/>
</dbReference>
<dbReference type="GO" id="GO:0003855">
    <property type="term" value="F:3-dehydroquinate dehydratase activity"/>
    <property type="evidence" value="ECO:0007669"/>
    <property type="project" value="UniProtKB-UniRule"/>
</dbReference>
<dbReference type="GO" id="GO:0046279">
    <property type="term" value="P:3,4-dihydroxybenzoate biosynthetic process"/>
    <property type="evidence" value="ECO:0007669"/>
    <property type="project" value="UniProtKB-ARBA"/>
</dbReference>
<dbReference type="GO" id="GO:0008652">
    <property type="term" value="P:amino acid biosynthetic process"/>
    <property type="evidence" value="ECO:0007669"/>
    <property type="project" value="UniProtKB-KW"/>
</dbReference>
<dbReference type="GO" id="GO:0009073">
    <property type="term" value="P:aromatic amino acid family biosynthetic process"/>
    <property type="evidence" value="ECO:0007669"/>
    <property type="project" value="UniProtKB-KW"/>
</dbReference>
<dbReference type="GO" id="GO:0009423">
    <property type="term" value="P:chorismate biosynthetic process"/>
    <property type="evidence" value="ECO:0007669"/>
    <property type="project" value="UniProtKB-UniRule"/>
</dbReference>
<dbReference type="CDD" id="cd00502">
    <property type="entry name" value="DHQase_I"/>
    <property type="match status" value="1"/>
</dbReference>
<dbReference type="Gene3D" id="3.20.20.70">
    <property type="entry name" value="Aldolase class I"/>
    <property type="match status" value="1"/>
</dbReference>
<dbReference type="HAMAP" id="MF_00214">
    <property type="entry name" value="AroD"/>
    <property type="match status" value="1"/>
</dbReference>
<dbReference type="InterPro" id="IPR013785">
    <property type="entry name" value="Aldolase_TIM"/>
</dbReference>
<dbReference type="InterPro" id="IPR001381">
    <property type="entry name" value="DHquinase_I"/>
</dbReference>
<dbReference type="InterPro" id="IPR050146">
    <property type="entry name" value="Type-I_3-dehydroquinase"/>
</dbReference>
<dbReference type="NCBIfam" id="TIGR01093">
    <property type="entry name" value="aroD"/>
    <property type="match status" value="1"/>
</dbReference>
<dbReference type="PANTHER" id="PTHR43699">
    <property type="entry name" value="3-DEHYDROQUINATE DEHYDRATASE"/>
    <property type="match status" value="1"/>
</dbReference>
<dbReference type="PANTHER" id="PTHR43699:SF1">
    <property type="entry name" value="3-DEHYDROQUINATE DEHYDRATASE"/>
    <property type="match status" value="1"/>
</dbReference>
<dbReference type="Pfam" id="PF01487">
    <property type="entry name" value="DHquinase_I"/>
    <property type="match status" value="1"/>
</dbReference>
<dbReference type="SUPFAM" id="SSF51569">
    <property type="entry name" value="Aldolase"/>
    <property type="match status" value="1"/>
</dbReference>
<proteinExistence type="inferred from homology"/>
<sequence length="228" mass="26101">MRIVAPVMPRHFDEAQAIDISKYEDVNLIEWRADFLPKDEIVAVAPAIFEKFAGKEIIFTLRTVQEGGNITLSSQEYVDIIKEINAIYNPDYIDFEYFTHKSVFQEMLDFPNLILSYHNFEETPENLMEAFSEMTKLAPRVVKIAVMPQSEQDVLDLMNYTRGFKTLNPEQEFATISMGKLGRLSRFAGDVIGSSWTYVSLDHVSGPGQVTLNDMKRIIEVLEMDISN</sequence>
<feature type="chain" id="PRO_1000043198" description="3-dehydroquinate dehydratase">
    <location>
        <begin position="1"/>
        <end position="228"/>
    </location>
</feature>
<feature type="active site" description="Proton donor/acceptor" evidence="1">
    <location>
        <position position="118"/>
    </location>
</feature>
<feature type="active site" description="Schiff-base intermediate with substrate" evidence="1">
    <location>
        <position position="143"/>
    </location>
</feature>
<feature type="binding site" evidence="1">
    <location>
        <begin position="30"/>
        <end position="32"/>
    </location>
    <ligand>
        <name>3-dehydroquinate</name>
        <dbReference type="ChEBI" id="CHEBI:32364"/>
    </ligand>
</feature>
<feature type="binding site" evidence="1">
    <location>
        <position position="62"/>
    </location>
    <ligand>
        <name>3-dehydroquinate</name>
        <dbReference type="ChEBI" id="CHEBI:32364"/>
    </ligand>
</feature>
<feature type="binding site" evidence="1">
    <location>
        <position position="186"/>
    </location>
    <ligand>
        <name>3-dehydroquinate</name>
        <dbReference type="ChEBI" id="CHEBI:32364"/>
    </ligand>
</feature>
<feature type="binding site" evidence="1">
    <location>
        <position position="205"/>
    </location>
    <ligand>
        <name>3-dehydroquinate</name>
        <dbReference type="ChEBI" id="CHEBI:32364"/>
    </ligand>
</feature>
<feature type="binding site" evidence="1">
    <location>
        <position position="209"/>
    </location>
    <ligand>
        <name>3-dehydroquinate</name>
        <dbReference type="ChEBI" id="CHEBI:32364"/>
    </ligand>
</feature>
<name>AROD_STRPD</name>
<keyword id="KW-0028">Amino-acid biosynthesis</keyword>
<keyword id="KW-0057">Aromatic amino acid biosynthesis</keyword>
<keyword id="KW-0456">Lyase</keyword>
<keyword id="KW-0704">Schiff base</keyword>
<reference key="1">
    <citation type="journal article" date="2006" name="Proc. Natl. Acad. Sci. U.S.A.">
        <title>Molecular genetic anatomy of inter- and intraserotype variation in the human bacterial pathogen group A Streptococcus.</title>
        <authorList>
            <person name="Beres S.B."/>
            <person name="Richter E.W."/>
            <person name="Nagiec M.J."/>
            <person name="Sumby P."/>
            <person name="Porcella S.F."/>
            <person name="DeLeo F.R."/>
            <person name="Musser J.M."/>
        </authorList>
    </citation>
    <scope>NUCLEOTIDE SEQUENCE [LARGE SCALE GENOMIC DNA]</scope>
    <source>
        <strain>MGAS10270</strain>
    </source>
</reference>
<organism>
    <name type="scientific">Streptococcus pyogenes serotype M2 (strain MGAS10270)</name>
    <dbReference type="NCBI Taxonomy" id="370552"/>
    <lineage>
        <taxon>Bacteria</taxon>
        <taxon>Bacillati</taxon>
        <taxon>Bacillota</taxon>
        <taxon>Bacilli</taxon>
        <taxon>Lactobacillales</taxon>
        <taxon>Streptococcaceae</taxon>
        <taxon>Streptococcus</taxon>
    </lineage>
</organism>
<gene>
    <name evidence="1" type="primary">aroD</name>
    <name type="ordered locus">MGAS10270_Spy0679</name>
</gene>
<protein>
    <recommendedName>
        <fullName evidence="1">3-dehydroquinate dehydratase</fullName>
        <shortName evidence="1">3-dehydroquinase</shortName>
        <ecNumber evidence="1">4.2.1.10</ecNumber>
    </recommendedName>
    <alternativeName>
        <fullName evidence="1">Type I DHQase</fullName>
    </alternativeName>
    <alternativeName>
        <fullName evidence="1">Type I dehydroquinase</fullName>
        <shortName evidence="1">DHQ1</shortName>
    </alternativeName>
</protein>
<comment type="function">
    <text evidence="1">Involved in the third step of the chorismate pathway, which leads to the biosynthesis of aromatic amino acids. Catalyzes the cis-dehydration of 3-dehydroquinate (DHQ) and introduces the first double bond of the aromatic ring to yield 3-dehydroshikimate.</text>
</comment>
<comment type="catalytic activity">
    <reaction evidence="1">
        <text>3-dehydroquinate = 3-dehydroshikimate + H2O</text>
        <dbReference type="Rhea" id="RHEA:21096"/>
        <dbReference type="ChEBI" id="CHEBI:15377"/>
        <dbReference type="ChEBI" id="CHEBI:16630"/>
        <dbReference type="ChEBI" id="CHEBI:32364"/>
        <dbReference type="EC" id="4.2.1.10"/>
    </reaction>
</comment>
<comment type="pathway">
    <text evidence="1">Metabolic intermediate biosynthesis; chorismate biosynthesis; chorismate from D-erythrose 4-phosphate and phosphoenolpyruvate: step 3/7.</text>
</comment>
<comment type="subunit">
    <text evidence="1">Homodimer.</text>
</comment>
<comment type="similarity">
    <text evidence="1">Belongs to the type-I 3-dehydroquinase family.</text>
</comment>
<accession>Q1JHJ2</accession>